<accession>Q83049</accession>
<keyword id="KW-0167">Capsid protein</keyword>
<keyword id="KW-1139">Helical capsid protein</keyword>
<keyword id="KW-1185">Reference proteome</keyword>
<keyword id="KW-0946">Virion</keyword>
<dbReference type="EMBL" id="U15441">
    <property type="protein sequence ID" value="AAA61802.1"/>
    <property type="molecule type" value="Genomic_RNA"/>
</dbReference>
<dbReference type="RefSeq" id="NP_619697.1">
    <property type="nucleotide sequence ID" value="NC_003618.1"/>
</dbReference>
<dbReference type="GeneID" id="991077"/>
<dbReference type="KEGG" id="vg:991077"/>
<dbReference type="Proteomes" id="UP000001099">
    <property type="component" value="Genome"/>
</dbReference>
<dbReference type="GO" id="GO:0019029">
    <property type="term" value="C:helical viral capsid"/>
    <property type="evidence" value="ECO:0007669"/>
    <property type="project" value="UniProtKB-KW"/>
</dbReference>
<dbReference type="InterPro" id="IPR002679">
    <property type="entry name" value="Closter_coat"/>
</dbReference>
<dbReference type="Pfam" id="PF01785">
    <property type="entry name" value="Closter_coat"/>
    <property type="match status" value="1"/>
</dbReference>
<name>CAPSD_LIYV9</name>
<sequence>MDTDGDNDVFGSGNDTRNNDDKKKEEMKQNISDNSQIISTRDHEADIIGSISKEDLSKIVVRVDRHDALSANDVQSFREAMINFMRDKDPNRNQPSDKLIIAMEVGVYQMVINLGTSAKLGNANNLEFTIAYDQETRTYKVADFVNYMQSRMRNSPNVVRQYARAMEKTINNIRSAGIINSNGVLAAKHGVLASYRNSYSDFAVGFGNDTTDAQLTSLMLARKQALCKGEGGSVEHYNTMQLANLKHPC</sequence>
<evidence type="ECO:0000256" key="1">
    <source>
        <dbReference type="SAM" id="MobiDB-lite"/>
    </source>
</evidence>
<evidence type="ECO:0000269" key="2">
    <source>
    </source>
</evidence>
<evidence type="ECO:0000305" key="3"/>
<organismHost>
    <name type="scientific">Beta vulgaris</name>
    <name type="common">Sugar beet</name>
    <dbReference type="NCBI Taxonomy" id="161934"/>
</organismHost>
<organismHost>
    <name type="scientific">Citrullus lanatus</name>
    <name type="common">Watermelon</name>
    <name type="synonym">Citrullus vulgaris</name>
    <dbReference type="NCBI Taxonomy" id="3654"/>
</organismHost>
<organismHost>
    <name type="scientific">Cucumis melo</name>
    <name type="common">Muskmelon</name>
    <dbReference type="NCBI Taxonomy" id="3656"/>
</organismHost>
<organismHost>
    <name type="scientific">Cucurbita maxima</name>
    <name type="common">Pumpkin</name>
    <name type="synonym">Winter squash</name>
    <dbReference type="NCBI Taxonomy" id="3661"/>
</organismHost>
<organismHost>
    <name type="scientific">Cucurbita moschata</name>
    <name type="common">Winter crookneck squash</name>
    <name type="synonym">Cucurbita pepo var. moschata</name>
    <dbReference type="NCBI Taxonomy" id="3662"/>
</organismHost>
<organismHost>
    <name type="scientific">Cucurbita pepo</name>
    <name type="common">Vegetable marrow</name>
    <name type="synonym">Summer squash</name>
    <dbReference type="NCBI Taxonomy" id="3663"/>
</organismHost>
<organismHost>
    <name type="scientific">Daucus carota</name>
    <name type="common">Wild carrot</name>
    <dbReference type="NCBI Taxonomy" id="4039"/>
</organismHost>
<organismHost>
    <name type="scientific">Lactuca sativa</name>
    <name type="common">Garden lettuce</name>
    <dbReference type="NCBI Taxonomy" id="4236"/>
</organismHost>
<proteinExistence type="inferred from homology"/>
<feature type="chain" id="PRO_0000402517" description="Capsid protein">
    <location>
        <begin position="1"/>
        <end position="249"/>
    </location>
</feature>
<feature type="region of interest" description="Disordered" evidence="1">
    <location>
        <begin position="1"/>
        <end position="33"/>
    </location>
</feature>
<feature type="compositionally biased region" description="Basic and acidic residues" evidence="1">
    <location>
        <begin position="17"/>
        <end position="28"/>
    </location>
</feature>
<organism>
    <name type="scientific">Lettuce infectious yellows virus (isolate United States/92)</name>
    <name type="common">LIYV</name>
    <dbReference type="NCBI Taxonomy" id="651355"/>
    <lineage>
        <taxon>Viruses</taxon>
        <taxon>Riboviria</taxon>
        <taxon>Orthornavirae</taxon>
        <taxon>Kitrinoviricota</taxon>
        <taxon>Alsuviricetes</taxon>
        <taxon>Martellivirales</taxon>
        <taxon>Closteroviridae</taxon>
        <taxon>Crinivirus</taxon>
        <taxon>Lettuce infectious yellows virus</taxon>
    </lineage>
</organism>
<protein>
    <recommendedName>
        <fullName>Capsid protein</fullName>
        <shortName>CP</shortName>
    </recommendedName>
    <alternativeName>
        <fullName>Coat protein</fullName>
    </alternativeName>
</protein>
<reference key="1">
    <citation type="journal article" date="1995" name="Virology">
        <title>Genome structure and phylogenetic analysis of lettuce infectious yellows virus, a whitefly-transmitted, bipartite closterovirus.</title>
        <authorList>
            <person name="Klaassen V.A."/>
            <person name="Boeshore M.L."/>
            <person name="Koonin E.V."/>
            <person name="Tian T."/>
            <person name="Falk B.W."/>
        </authorList>
    </citation>
    <scope>NUCLEOTIDE SEQUENCE [GENOMIC RNA]</scope>
</reference>
<reference key="2">
    <citation type="journal article" date="1994" name="J. Gen. Virol.">
        <title>Partial characterization of the lettuce infectious yellows virus genomic RNAs, identification of the coat protein gene and comparison of its amino acid sequence with those of other filamentous RNA plant viruses.</title>
        <authorList>
            <person name="Klaassen V.A."/>
            <person name="Boeshore M."/>
            <person name="Dolja V.V."/>
            <person name="Falk B.W."/>
        </authorList>
    </citation>
    <scope>NUCLEOTIDE SEQUENCE [GENOMIC RNA]</scope>
</reference>
<reference key="3">
    <citation type="journal article" date="1999" name="J. Gen. Virol.">
        <title>Lettuce infectious yellows virus: in vitro acquisition analysis using partially purified virions and the whitefly Bemisia tabaci.</title>
        <authorList>
            <person name="Tian T."/>
            <person name="Rubio L."/>
            <person name="Yeh H.H."/>
            <person name="Crawford B."/>
            <person name="Falk B.W."/>
        </authorList>
    </citation>
    <scope>SUBCELLULAR LOCATION</scope>
</reference>
<comment type="function">
    <text evidence="3">Capsid protein self-assembles to form filamentous capsids, about 650-850 nm in length.</text>
</comment>
<comment type="subcellular location">
    <subcellularLocation>
        <location evidence="2">Virion</location>
    </subcellularLocation>
</comment>
<comment type="similarity">
    <text evidence="3">Belongs to the closteroviridae capsid protein family.</text>
</comment>